<evidence type="ECO:0000255" key="1">
    <source>
        <dbReference type="HAMAP-Rule" id="MF_00534"/>
    </source>
</evidence>
<accession>Q7NBM9</accession>
<dbReference type="EC" id="6.1.1.22" evidence="1"/>
<dbReference type="EMBL" id="AE015450">
    <property type="protein sequence ID" value="AAP56589.2"/>
    <property type="molecule type" value="Genomic_DNA"/>
</dbReference>
<dbReference type="RefSeq" id="WP_011113481.1">
    <property type="nucleotide sequence ID" value="NC_004829.2"/>
</dbReference>
<dbReference type="SMR" id="Q7NBM9"/>
<dbReference type="KEGG" id="mga:MGA_1065"/>
<dbReference type="PATRIC" id="fig|233150.7.peg.266"/>
<dbReference type="HOGENOM" id="CLU_004553_2_0_14"/>
<dbReference type="OrthoDB" id="9762036at2"/>
<dbReference type="Proteomes" id="UP000001418">
    <property type="component" value="Chromosome"/>
</dbReference>
<dbReference type="GO" id="GO:0005737">
    <property type="term" value="C:cytoplasm"/>
    <property type="evidence" value="ECO:0007669"/>
    <property type="project" value="UniProtKB-SubCell"/>
</dbReference>
<dbReference type="GO" id="GO:0004816">
    <property type="term" value="F:asparagine-tRNA ligase activity"/>
    <property type="evidence" value="ECO:0007669"/>
    <property type="project" value="UniProtKB-UniRule"/>
</dbReference>
<dbReference type="GO" id="GO:0005524">
    <property type="term" value="F:ATP binding"/>
    <property type="evidence" value="ECO:0007669"/>
    <property type="project" value="UniProtKB-UniRule"/>
</dbReference>
<dbReference type="GO" id="GO:0003676">
    <property type="term" value="F:nucleic acid binding"/>
    <property type="evidence" value="ECO:0007669"/>
    <property type="project" value="InterPro"/>
</dbReference>
<dbReference type="GO" id="GO:0006421">
    <property type="term" value="P:asparaginyl-tRNA aminoacylation"/>
    <property type="evidence" value="ECO:0007669"/>
    <property type="project" value="UniProtKB-UniRule"/>
</dbReference>
<dbReference type="CDD" id="cd00776">
    <property type="entry name" value="AsxRS_core"/>
    <property type="match status" value="1"/>
</dbReference>
<dbReference type="CDD" id="cd04318">
    <property type="entry name" value="EcAsnRS_like_N"/>
    <property type="match status" value="1"/>
</dbReference>
<dbReference type="FunFam" id="3.30.930.10:FF:000016">
    <property type="entry name" value="Asparagine--tRNA ligase"/>
    <property type="match status" value="1"/>
</dbReference>
<dbReference type="Gene3D" id="3.30.930.10">
    <property type="entry name" value="Bira Bifunctional Protein, Domain 2"/>
    <property type="match status" value="1"/>
</dbReference>
<dbReference type="Gene3D" id="2.40.50.140">
    <property type="entry name" value="Nucleic acid-binding proteins"/>
    <property type="match status" value="1"/>
</dbReference>
<dbReference type="HAMAP" id="MF_00534">
    <property type="entry name" value="Asn_tRNA_synth"/>
    <property type="match status" value="1"/>
</dbReference>
<dbReference type="InterPro" id="IPR004364">
    <property type="entry name" value="Aa-tRNA-synt_II"/>
</dbReference>
<dbReference type="InterPro" id="IPR006195">
    <property type="entry name" value="aa-tRNA-synth_II"/>
</dbReference>
<dbReference type="InterPro" id="IPR045864">
    <property type="entry name" value="aa-tRNA-synth_II/BPL/LPL"/>
</dbReference>
<dbReference type="InterPro" id="IPR004522">
    <property type="entry name" value="Asn-tRNA-ligase"/>
</dbReference>
<dbReference type="InterPro" id="IPR002312">
    <property type="entry name" value="Asp/Asn-tRNA-synth_IIb"/>
</dbReference>
<dbReference type="InterPro" id="IPR012340">
    <property type="entry name" value="NA-bd_OB-fold"/>
</dbReference>
<dbReference type="InterPro" id="IPR004365">
    <property type="entry name" value="NA-bd_OB_tRNA"/>
</dbReference>
<dbReference type="NCBIfam" id="TIGR00457">
    <property type="entry name" value="asnS"/>
    <property type="match status" value="1"/>
</dbReference>
<dbReference type="NCBIfam" id="NF003037">
    <property type="entry name" value="PRK03932.1"/>
    <property type="match status" value="1"/>
</dbReference>
<dbReference type="PANTHER" id="PTHR22594:SF34">
    <property type="entry name" value="ASPARAGINE--TRNA LIGASE, MITOCHONDRIAL-RELATED"/>
    <property type="match status" value="1"/>
</dbReference>
<dbReference type="PANTHER" id="PTHR22594">
    <property type="entry name" value="ASPARTYL/LYSYL-TRNA SYNTHETASE"/>
    <property type="match status" value="1"/>
</dbReference>
<dbReference type="Pfam" id="PF00152">
    <property type="entry name" value="tRNA-synt_2"/>
    <property type="match status" value="1"/>
</dbReference>
<dbReference type="Pfam" id="PF01336">
    <property type="entry name" value="tRNA_anti-codon"/>
    <property type="match status" value="1"/>
</dbReference>
<dbReference type="PRINTS" id="PR01042">
    <property type="entry name" value="TRNASYNTHASP"/>
</dbReference>
<dbReference type="SUPFAM" id="SSF55681">
    <property type="entry name" value="Class II aaRS and biotin synthetases"/>
    <property type="match status" value="1"/>
</dbReference>
<dbReference type="SUPFAM" id="SSF50249">
    <property type="entry name" value="Nucleic acid-binding proteins"/>
    <property type="match status" value="1"/>
</dbReference>
<dbReference type="PROSITE" id="PS50862">
    <property type="entry name" value="AA_TRNA_LIGASE_II"/>
    <property type="match status" value="1"/>
</dbReference>
<organism>
    <name type="scientific">Mycoplasmoides gallisepticum (strain R(low / passage 15 / clone 2))</name>
    <name type="common">Mycoplasma gallisepticum</name>
    <dbReference type="NCBI Taxonomy" id="710127"/>
    <lineage>
        <taxon>Bacteria</taxon>
        <taxon>Bacillati</taxon>
        <taxon>Mycoplasmatota</taxon>
        <taxon>Mycoplasmoidales</taxon>
        <taxon>Mycoplasmoidaceae</taxon>
        <taxon>Mycoplasmoides</taxon>
    </lineage>
</organism>
<name>SYN_MYCGA</name>
<proteinExistence type="inferred from homology"/>
<comment type="catalytic activity">
    <reaction evidence="1">
        <text>tRNA(Asn) + L-asparagine + ATP = L-asparaginyl-tRNA(Asn) + AMP + diphosphate + H(+)</text>
        <dbReference type="Rhea" id="RHEA:11180"/>
        <dbReference type="Rhea" id="RHEA-COMP:9659"/>
        <dbReference type="Rhea" id="RHEA-COMP:9674"/>
        <dbReference type="ChEBI" id="CHEBI:15378"/>
        <dbReference type="ChEBI" id="CHEBI:30616"/>
        <dbReference type="ChEBI" id="CHEBI:33019"/>
        <dbReference type="ChEBI" id="CHEBI:58048"/>
        <dbReference type="ChEBI" id="CHEBI:78442"/>
        <dbReference type="ChEBI" id="CHEBI:78515"/>
        <dbReference type="ChEBI" id="CHEBI:456215"/>
        <dbReference type="EC" id="6.1.1.22"/>
    </reaction>
</comment>
<comment type="subunit">
    <text evidence="1">Homodimer.</text>
</comment>
<comment type="subcellular location">
    <subcellularLocation>
        <location evidence="1">Cytoplasm</location>
    </subcellularLocation>
</comment>
<comment type="similarity">
    <text evidence="1">Belongs to the class-II aminoacyl-tRNA synthetase family.</text>
</comment>
<gene>
    <name evidence="1" type="primary">asnS</name>
    <name type="ordered locus">MYCGA2390</name>
    <name type="ORF">MGA_1065</name>
</gene>
<reference key="1">
    <citation type="journal article" date="2003" name="Microbiology">
        <title>The complete genome sequence of the avian pathogen Mycoplasma gallisepticum strain R(low).</title>
        <authorList>
            <person name="Papazisi L."/>
            <person name="Gorton T.S."/>
            <person name="Kutish G."/>
            <person name="Markham P.F."/>
            <person name="Browning G.F."/>
            <person name="Nguyen D.K."/>
            <person name="Swartzell S."/>
            <person name="Madan A."/>
            <person name="Mahairas G."/>
            <person name="Geary S.J."/>
        </authorList>
    </citation>
    <scope>NUCLEOTIDE SEQUENCE [LARGE SCALE GENOMIC DNA]</scope>
    <source>
        <strain>R(low / passage 15 / clone 2)</strain>
    </source>
</reference>
<sequence length="456" mass="52316">MQLIEIKELLLSHSKREGEQVVLVGSFKSIRSSGAIGFIAFSDSTALEPVQIVFKKENTPNFDEISKLPISSMILVKGVVRNTPEKKQPFEIQASKIVVLKEADPSYPLQKKAHGSEFLRENAHLRVRTNKFYVIMKIRSELANAFFEFFKNNDFLYVHAPLITSNDSEGAGESFEVISPNDPNYFGKKASLTVSGQFAAEAYAQGFKRVFTFGPTFRAEKSHTSKHLSEFWMIEPEVSLMDLDKLTILIEQCVKHAIYYLFDYAKPELEWCNENLEPGLIDKLNNVINNDFPRVEYREVIEILKKAVAEGVEFEVKDIHFGMDLKSEHERYICEKVFKRPVFVINYPKDVKAFYMKLNDDNQTVAATDLLAPGIGEICGGSQREDSYNKLLTRCLELDIDPEFNNLQWYLDLRKYGYYRSAGFGLGFERLLMYVTGCDNIRDAIPFPRFHGQLDF</sequence>
<feature type="chain" id="PRO_0000176427" description="Asparagine--tRNA ligase">
    <location>
        <begin position="1"/>
        <end position="456"/>
    </location>
</feature>
<keyword id="KW-0030">Aminoacyl-tRNA synthetase</keyword>
<keyword id="KW-0067">ATP-binding</keyword>
<keyword id="KW-0963">Cytoplasm</keyword>
<keyword id="KW-0436">Ligase</keyword>
<keyword id="KW-0547">Nucleotide-binding</keyword>
<keyword id="KW-0648">Protein biosynthesis</keyword>
<keyword id="KW-1185">Reference proteome</keyword>
<protein>
    <recommendedName>
        <fullName evidence="1">Asparagine--tRNA ligase</fullName>
        <ecNumber evidence="1">6.1.1.22</ecNumber>
    </recommendedName>
    <alternativeName>
        <fullName evidence="1">Asparaginyl-tRNA synthetase</fullName>
        <shortName evidence="1">AsnRS</shortName>
    </alternativeName>
</protein>